<sequence>MMYHIPGVLSPQDVARFREQLEQAEWVDGRVTTGAQGAQVKNNQQVDTRSTLYAALQNEVLNAVNQHALFFAAALPRTLSTPLFNRYQNNETYGFHVDGAVRSHPQNGWMRTDLSATLFLSDPQSYDGGELVVNDTFGQHRVKLPAGDLVLYPSSSLHCVTPVTRGVRVASFMWIQSMIRDDKKRAMLFELDNNIQSLKSRYGESEEILSLLNLYHNLLREWSEI</sequence>
<name>YBIX_ECOLI</name>
<dbReference type="EC" id="1.14.11.-"/>
<dbReference type="EMBL" id="U00096">
    <property type="protein sequence ID" value="AAC73891.2"/>
    <property type="molecule type" value="Genomic_DNA"/>
</dbReference>
<dbReference type="EMBL" id="AP009048">
    <property type="protein sequence ID" value="BAA35470.2"/>
    <property type="molecule type" value="Genomic_DNA"/>
</dbReference>
<dbReference type="PIR" id="D64817">
    <property type="entry name" value="D64817"/>
</dbReference>
<dbReference type="RefSeq" id="NP_415325.4">
    <property type="nucleotide sequence ID" value="NC_000913.3"/>
</dbReference>
<dbReference type="RefSeq" id="WP_000990177.1">
    <property type="nucleotide sequence ID" value="NZ_STEB01000019.1"/>
</dbReference>
<dbReference type="SMR" id="P75779"/>
<dbReference type="BioGRID" id="4259955">
    <property type="interactions" value="9"/>
</dbReference>
<dbReference type="FunCoup" id="P75779">
    <property type="interactions" value="2"/>
</dbReference>
<dbReference type="STRING" id="511145.b0804"/>
<dbReference type="jPOST" id="P75779"/>
<dbReference type="PaxDb" id="511145-b0804"/>
<dbReference type="EnsemblBacteria" id="AAC73891">
    <property type="protein sequence ID" value="AAC73891"/>
    <property type="gene ID" value="b0804"/>
</dbReference>
<dbReference type="GeneID" id="947502"/>
<dbReference type="KEGG" id="ecj:JW5105"/>
<dbReference type="KEGG" id="eco:b0804"/>
<dbReference type="KEGG" id="ecoc:C3026_05070"/>
<dbReference type="PATRIC" id="fig|511145.12.peg.831"/>
<dbReference type="EchoBASE" id="EB3100"/>
<dbReference type="eggNOG" id="COG3128">
    <property type="taxonomic scope" value="Bacteria"/>
</dbReference>
<dbReference type="HOGENOM" id="CLU_106663_0_0_6"/>
<dbReference type="InParanoid" id="P75779"/>
<dbReference type="OMA" id="TAGWHAK"/>
<dbReference type="OrthoDB" id="9812472at2"/>
<dbReference type="PhylomeDB" id="P75779"/>
<dbReference type="BioCyc" id="EcoCyc:G6413-MONOMER"/>
<dbReference type="PRO" id="PR:P75779"/>
<dbReference type="Proteomes" id="UP000000625">
    <property type="component" value="Chromosome"/>
</dbReference>
<dbReference type="GO" id="GO:0016706">
    <property type="term" value="F:2-oxoglutarate-dependent dioxygenase activity"/>
    <property type="evidence" value="ECO:0007669"/>
    <property type="project" value="UniProtKB-UniRule"/>
</dbReference>
<dbReference type="GO" id="GO:0005506">
    <property type="term" value="F:iron ion binding"/>
    <property type="evidence" value="ECO:0007669"/>
    <property type="project" value="UniProtKB-UniRule"/>
</dbReference>
<dbReference type="GO" id="GO:0031418">
    <property type="term" value="F:L-ascorbic acid binding"/>
    <property type="evidence" value="ECO:0007669"/>
    <property type="project" value="UniProtKB-KW"/>
</dbReference>
<dbReference type="GO" id="GO:0006974">
    <property type="term" value="P:DNA damage response"/>
    <property type="evidence" value="ECO:0000270"/>
    <property type="project" value="EcoliWiki"/>
</dbReference>
<dbReference type="GO" id="GO:0006879">
    <property type="term" value="P:intracellular iron ion homeostasis"/>
    <property type="evidence" value="ECO:0000270"/>
    <property type="project" value="EcoCyc"/>
</dbReference>
<dbReference type="FunFam" id="2.60.120.620:FF:000006">
    <property type="entry name" value="PKHD-type hydroxylase YbiX"/>
    <property type="match status" value="1"/>
</dbReference>
<dbReference type="FunFam" id="4.10.860.20:FF:000001">
    <property type="entry name" value="PKHD-type hydroxylase YbiX"/>
    <property type="match status" value="1"/>
</dbReference>
<dbReference type="Gene3D" id="2.60.120.620">
    <property type="entry name" value="q2cbj1_9rhob like domain"/>
    <property type="match status" value="1"/>
</dbReference>
<dbReference type="Gene3D" id="4.10.860.20">
    <property type="entry name" value="Rabenosyn, Rab binding domain"/>
    <property type="match status" value="1"/>
</dbReference>
<dbReference type="HAMAP" id="MF_00657">
    <property type="entry name" value="Hydroxyl_YbiX"/>
    <property type="match status" value="1"/>
</dbReference>
<dbReference type="InterPro" id="IPR005123">
    <property type="entry name" value="Oxoglu/Fe-dep_dioxygenase_dom"/>
</dbReference>
<dbReference type="InterPro" id="IPR041097">
    <property type="entry name" value="PKHD_C"/>
</dbReference>
<dbReference type="InterPro" id="IPR023550">
    <property type="entry name" value="PKHD_hydroxylase"/>
</dbReference>
<dbReference type="InterPro" id="IPR006620">
    <property type="entry name" value="Pro_4_hyd_alph"/>
</dbReference>
<dbReference type="InterPro" id="IPR044862">
    <property type="entry name" value="Pro_4_hyd_alph_FE2OG_OXY"/>
</dbReference>
<dbReference type="NCBIfam" id="NF003972">
    <property type="entry name" value="PRK05467.1-1"/>
    <property type="match status" value="1"/>
</dbReference>
<dbReference type="NCBIfam" id="NF003974">
    <property type="entry name" value="PRK05467.1-3"/>
    <property type="match status" value="1"/>
</dbReference>
<dbReference type="NCBIfam" id="NF003975">
    <property type="entry name" value="PRK05467.1-4"/>
    <property type="match status" value="1"/>
</dbReference>
<dbReference type="PANTHER" id="PTHR41536">
    <property type="entry name" value="PKHD-TYPE HYDROXYLASE YBIX"/>
    <property type="match status" value="1"/>
</dbReference>
<dbReference type="PANTHER" id="PTHR41536:SF1">
    <property type="entry name" value="PKHD-TYPE HYDROXYLASE YBIX"/>
    <property type="match status" value="1"/>
</dbReference>
<dbReference type="Pfam" id="PF13640">
    <property type="entry name" value="2OG-FeII_Oxy_3"/>
    <property type="match status" value="1"/>
</dbReference>
<dbReference type="Pfam" id="PF18331">
    <property type="entry name" value="PKHD_C"/>
    <property type="match status" value="1"/>
</dbReference>
<dbReference type="SMART" id="SM00702">
    <property type="entry name" value="P4Hc"/>
    <property type="match status" value="1"/>
</dbReference>
<dbReference type="SUPFAM" id="SSF51197">
    <property type="entry name" value="Clavaminate synthase-like"/>
    <property type="match status" value="1"/>
</dbReference>
<dbReference type="PROSITE" id="PS51471">
    <property type="entry name" value="FE2OG_OXY"/>
    <property type="match status" value="1"/>
</dbReference>
<evidence type="ECO:0000250" key="1"/>
<evidence type="ECO:0000255" key="2"/>
<keyword id="KW-0223">Dioxygenase</keyword>
<keyword id="KW-0408">Iron</keyword>
<keyword id="KW-0479">Metal-binding</keyword>
<keyword id="KW-0560">Oxidoreductase</keyword>
<keyword id="KW-1185">Reference proteome</keyword>
<keyword id="KW-0847">Vitamin C</keyword>
<reference key="1">
    <citation type="journal article" date="1996" name="DNA Res.">
        <title>A 718-kb DNA sequence of the Escherichia coli K-12 genome corresponding to the 12.7-28.0 min region on the linkage map.</title>
        <authorList>
            <person name="Oshima T."/>
            <person name="Aiba H."/>
            <person name="Baba T."/>
            <person name="Fujita K."/>
            <person name="Hayashi K."/>
            <person name="Honjo A."/>
            <person name="Ikemoto K."/>
            <person name="Inada T."/>
            <person name="Itoh T."/>
            <person name="Kajihara M."/>
            <person name="Kanai K."/>
            <person name="Kashimoto K."/>
            <person name="Kimura S."/>
            <person name="Kitagawa M."/>
            <person name="Makino K."/>
            <person name="Masuda S."/>
            <person name="Miki T."/>
            <person name="Mizobuchi K."/>
            <person name="Mori H."/>
            <person name="Motomura K."/>
            <person name="Nakamura Y."/>
            <person name="Nashimoto H."/>
            <person name="Nishio Y."/>
            <person name="Saito N."/>
            <person name="Sampei G."/>
            <person name="Seki Y."/>
            <person name="Tagami H."/>
            <person name="Takemoto K."/>
            <person name="Wada C."/>
            <person name="Yamamoto Y."/>
            <person name="Yano M."/>
            <person name="Horiuchi T."/>
        </authorList>
    </citation>
    <scope>NUCLEOTIDE SEQUENCE [LARGE SCALE GENOMIC DNA]</scope>
    <source>
        <strain>K12 / W3110 / ATCC 27325 / DSM 5911</strain>
    </source>
</reference>
<reference key="2">
    <citation type="journal article" date="1997" name="Science">
        <title>The complete genome sequence of Escherichia coli K-12.</title>
        <authorList>
            <person name="Blattner F.R."/>
            <person name="Plunkett G. III"/>
            <person name="Bloch C.A."/>
            <person name="Perna N.T."/>
            <person name="Burland V."/>
            <person name="Riley M."/>
            <person name="Collado-Vides J."/>
            <person name="Glasner J.D."/>
            <person name="Rode C.K."/>
            <person name="Mayhew G.F."/>
            <person name="Gregor J."/>
            <person name="Davis N.W."/>
            <person name="Kirkpatrick H.A."/>
            <person name="Goeden M.A."/>
            <person name="Rose D.J."/>
            <person name="Mau B."/>
            <person name="Shao Y."/>
        </authorList>
    </citation>
    <scope>NUCLEOTIDE SEQUENCE [LARGE SCALE GENOMIC DNA]</scope>
    <source>
        <strain>K12 / MG1655 / ATCC 47076</strain>
    </source>
</reference>
<reference key="3">
    <citation type="journal article" date="2006" name="Mol. Syst. Biol.">
        <title>Highly accurate genome sequences of Escherichia coli K-12 strains MG1655 and W3110.</title>
        <authorList>
            <person name="Hayashi K."/>
            <person name="Morooka N."/>
            <person name="Yamamoto Y."/>
            <person name="Fujita K."/>
            <person name="Isono K."/>
            <person name="Choi S."/>
            <person name="Ohtsubo E."/>
            <person name="Baba T."/>
            <person name="Wanner B.L."/>
            <person name="Mori H."/>
            <person name="Horiuchi T."/>
        </authorList>
    </citation>
    <scope>NUCLEOTIDE SEQUENCE [LARGE SCALE GENOMIC DNA]</scope>
    <source>
        <strain>K12 / W3110 / ATCC 27325 / DSM 5911</strain>
    </source>
</reference>
<feature type="chain" id="PRO_0000206676" description="PKHD-type hydroxylase YbiX">
    <location>
        <begin position="1"/>
        <end position="225"/>
    </location>
</feature>
<feature type="domain" description="Fe2OG dioxygenase">
    <location>
        <begin position="78"/>
        <end position="177"/>
    </location>
</feature>
<feature type="binding site" evidence="1">
    <location>
        <position position="96"/>
    </location>
    <ligand>
        <name>Fe cation</name>
        <dbReference type="ChEBI" id="CHEBI:24875"/>
    </ligand>
</feature>
<feature type="binding site" evidence="1">
    <location>
        <position position="98"/>
    </location>
    <ligand>
        <name>Fe cation</name>
        <dbReference type="ChEBI" id="CHEBI:24875"/>
    </ligand>
</feature>
<feature type="binding site" evidence="1">
    <location>
        <position position="158"/>
    </location>
    <ligand>
        <name>Fe cation</name>
        <dbReference type="ChEBI" id="CHEBI:24875"/>
    </ligand>
</feature>
<feature type="binding site" evidence="2">
    <location>
        <position position="168"/>
    </location>
    <ligand>
        <name>2-oxoglutarate</name>
        <dbReference type="ChEBI" id="CHEBI:16810"/>
    </ligand>
</feature>
<proteinExistence type="inferred from homology"/>
<protein>
    <recommendedName>
        <fullName>PKHD-type hydroxylase YbiX</fullName>
        <ecNumber>1.14.11.-</ecNumber>
    </recommendedName>
</protein>
<comment type="cofactor">
    <cofactor evidence="1">
        <name>Fe(2+)</name>
        <dbReference type="ChEBI" id="CHEBI:29033"/>
    </cofactor>
    <text evidence="1">Binds 1 Fe(2+) ion per subunit.</text>
</comment>
<comment type="cofactor">
    <cofactor evidence="1">
        <name>L-ascorbate</name>
        <dbReference type="ChEBI" id="CHEBI:38290"/>
    </cofactor>
</comment>
<organism>
    <name type="scientific">Escherichia coli (strain K12)</name>
    <dbReference type="NCBI Taxonomy" id="83333"/>
    <lineage>
        <taxon>Bacteria</taxon>
        <taxon>Pseudomonadati</taxon>
        <taxon>Pseudomonadota</taxon>
        <taxon>Gammaproteobacteria</taxon>
        <taxon>Enterobacterales</taxon>
        <taxon>Enterobacteriaceae</taxon>
        <taxon>Escherichia</taxon>
    </lineage>
</organism>
<accession>P75779</accession>
<accession>Q9R7S1</accession>
<gene>
    <name type="primary">ybiX</name>
    <name type="ordered locus">b0804</name>
    <name type="ordered locus">JW5105</name>
</gene>